<comment type="function">
    <text evidence="1">PPIases accelerate the folding of proteins. It catalyzes the cis-trans isomerization of proline imidic peptide bonds in oligopeptides (By similarity).</text>
</comment>
<comment type="catalytic activity">
    <reaction>
        <text>[protein]-peptidylproline (omega=180) = [protein]-peptidylproline (omega=0)</text>
        <dbReference type="Rhea" id="RHEA:16237"/>
        <dbReference type="Rhea" id="RHEA-COMP:10747"/>
        <dbReference type="Rhea" id="RHEA-COMP:10748"/>
        <dbReference type="ChEBI" id="CHEBI:83833"/>
        <dbReference type="ChEBI" id="CHEBI:83834"/>
        <dbReference type="EC" id="5.2.1.8"/>
    </reaction>
</comment>
<comment type="similarity">
    <text evidence="3">Belongs to the cyclophilin-type PPIase family.</text>
</comment>
<organism>
    <name type="scientific">Rhizopus delemar (strain RA 99-880 / ATCC MYA-4621 / FGSC 9543 / NRRL 43880)</name>
    <name type="common">Mucormycosis agent</name>
    <name type="synonym">Rhizopus arrhizus var. delemar</name>
    <dbReference type="NCBI Taxonomy" id="246409"/>
    <lineage>
        <taxon>Eukaryota</taxon>
        <taxon>Fungi</taxon>
        <taxon>Fungi incertae sedis</taxon>
        <taxon>Mucoromycota</taxon>
        <taxon>Mucoromycotina</taxon>
        <taxon>Mucoromycetes</taxon>
        <taxon>Mucorales</taxon>
        <taxon>Mucorineae</taxon>
        <taxon>Rhizopodaceae</taxon>
        <taxon>Rhizopus</taxon>
    </lineage>
</organism>
<sequence>MAAKNLPKVFFDIAVNGQHSGRMTFKLFSDTVPKTAENFRALCTGEKGKGISGKPLHYKNSYFHRIIPGFMAQGGDFTMGDGRGGESIYGRTFKDENFTLKHKGKGLLSMANAGPNTNGSQFFITFVDTPWLDGNHTVFGQIVDGSKVLDLLEQHGSRSGMPSAKIEITDCGELKD</sequence>
<gene>
    <name type="primary">cyp6</name>
    <name type="ORF">RO3G_10072</name>
</gene>
<feature type="chain" id="PRO_0000244721" description="Peptidyl-prolyl cis-trans isomerase cyp6">
    <location>
        <begin position="1"/>
        <end position="176"/>
    </location>
</feature>
<feature type="domain" description="PPIase cyclophilin-type" evidence="2">
    <location>
        <begin position="10"/>
        <end position="173"/>
    </location>
</feature>
<evidence type="ECO:0000250" key="1"/>
<evidence type="ECO:0000255" key="2">
    <source>
        <dbReference type="PROSITE-ProRule" id="PRU00156"/>
    </source>
</evidence>
<evidence type="ECO:0000305" key="3"/>
<reference key="1">
    <citation type="journal article" date="2009" name="PLoS Genet.">
        <title>Genomic analysis of the basal lineage fungus Rhizopus oryzae reveals a whole-genome duplication.</title>
        <authorList>
            <person name="Ma L.-J."/>
            <person name="Ibrahim A.S."/>
            <person name="Skory C."/>
            <person name="Grabherr M.G."/>
            <person name="Burger G."/>
            <person name="Butler M."/>
            <person name="Elias M."/>
            <person name="Idnurm A."/>
            <person name="Lang B.F."/>
            <person name="Sone T."/>
            <person name="Abe A."/>
            <person name="Calvo S.E."/>
            <person name="Corrochano L.M."/>
            <person name="Engels R."/>
            <person name="Fu J."/>
            <person name="Hansberg W."/>
            <person name="Kim J.-M."/>
            <person name="Kodira C.D."/>
            <person name="Koehrsen M.J."/>
            <person name="Liu B."/>
            <person name="Miranda-Saavedra D."/>
            <person name="O'Leary S."/>
            <person name="Ortiz-Castellanos L."/>
            <person name="Poulter R."/>
            <person name="Rodriguez-Romero J."/>
            <person name="Ruiz-Herrera J."/>
            <person name="Shen Y.-Q."/>
            <person name="Zeng Q."/>
            <person name="Galagan J."/>
            <person name="Birren B.W."/>
            <person name="Cuomo C.A."/>
            <person name="Wickes B.L."/>
        </authorList>
    </citation>
    <scope>NUCLEOTIDE SEQUENCE [LARGE SCALE GENOMIC DNA]</scope>
    <source>
        <strain>RA 99-880 / ATCC MYA-4621 / FGSC 9543 / NRRL 43880</strain>
    </source>
</reference>
<name>CYP6_RHIO9</name>
<accession>P0C1I8</accession>
<accession>I1CA82</accession>
<keyword id="KW-0413">Isomerase</keyword>
<keyword id="KW-1185">Reference proteome</keyword>
<keyword id="KW-0697">Rotamase</keyword>
<proteinExistence type="inferred from homology"/>
<dbReference type="EC" id="5.2.1.8"/>
<dbReference type="EMBL" id="CH476738">
    <property type="protein sequence ID" value="EIE85362.1"/>
    <property type="molecule type" value="Genomic_DNA"/>
</dbReference>
<dbReference type="SMR" id="P0C1I8"/>
<dbReference type="STRING" id="246409.P0C1I8"/>
<dbReference type="VEuPathDB" id="FungiDB:RO3G_10072"/>
<dbReference type="eggNOG" id="KOG0865">
    <property type="taxonomic scope" value="Eukaryota"/>
</dbReference>
<dbReference type="InParanoid" id="P0C1I8"/>
<dbReference type="OMA" id="NHEVGCI"/>
<dbReference type="OrthoDB" id="43128at4827"/>
<dbReference type="Proteomes" id="UP000009138">
    <property type="component" value="Unassembled WGS sequence"/>
</dbReference>
<dbReference type="GO" id="GO:0005739">
    <property type="term" value="C:mitochondrion"/>
    <property type="evidence" value="ECO:0007669"/>
    <property type="project" value="TreeGrafter"/>
</dbReference>
<dbReference type="GO" id="GO:0016018">
    <property type="term" value="F:cyclosporin A binding"/>
    <property type="evidence" value="ECO:0007669"/>
    <property type="project" value="TreeGrafter"/>
</dbReference>
<dbReference type="GO" id="GO:0003755">
    <property type="term" value="F:peptidyl-prolyl cis-trans isomerase activity"/>
    <property type="evidence" value="ECO:0007669"/>
    <property type="project" value="UniProtKB-KW"/>
</dbReference>
<dbReference type="GO" id="GO:0006457">
    <property type="term" value="P:protein folding"/>
    <property type="evidence" value="ECO:0007669"/>
    <property type="project" value="InterPro"/>
</dbReference>
<dbReference type="FunFam" id="2.40.100.10:FF:000022">
    <property type="entry name" value="Peptidyl-prolyl cis-trans isomerase CYP95"/>
    <property type="match status" value="1"/>
</dbReference>
<dbReference type="Gene3D" id="2.40.100.10">
    <property type="entry name" value="Cyclophilin-like"/>
    <property type="match status" value="1"/>
</dbReference>
<dbReference type="InterPro" id="IPR029000">
    <property type="entry name" value="Cyclophilin-like_dom_sf"/>
</dbReference>
<dbReference type="InterPro" id="IPR024936">
    <property type="entry name" value="Cyclophilin-type_PPIase"/>
</dbReference>
<dbReference type="InterPro" id="IPR020892">
    <property type="entry name" value="Cyclophilin-type_PPIase_CS"/>
</dbReference>
<dbReference type="InterPro" id="IPR002130">
    <property type="entry name" value="Cyclophilin-type_PPIase_dom"/>
</dbReference>
<dbReference type="PANTHER" id="PTHR11071">
    <property type="entry name" value="PEPTIDYL-PROLYL CIS-TRANS ISOMERASE"/>
    <property type="match status" value="1"/>
</dbReference>
<dbReference type="PANTHER" id="PTHR11071:SF561">
    <property type="entry name" value="PEPTIDYL-PROLYL CIS-TRANS ISOMERASE D-RELATED"/>
    <property type="match status" value="1"/>
</dbReference>
<dbReference type="Pfam" id="PF00160">
    <property type="entry name" value="Pro_isomerase"/>
    <property type="match status" value="1"/>
</dbReference>
<dbReference type="PIRSF" id="PIRSF001467">
    <property type="entry name" value="Peptidylpro_ismrse"/>
    <property type="match status" value="1"/>
</dbReference>
<dbReference type="PRINTS" id="PR00153">
    <property type="entry name" value="CSAPPISMRASE"/>
</dbReference>
<dbReference type="SUPFAM" id="SSF50891">
    <property type="entry name" value="Cyclophilin-like"/>
    <property type="match status" value="1"/>
</dbReference>
<dbReference type="PROSITE" id="PS00170">
    <property type="entry name" value="CSA_PPIASE_1"/>
    <property type="match status" value="1"/>
</dbReference>
<dbReference type="PROSITE" id="PS50072">
    <property type="entry name" value="CSA_PPIASE_2"/>
    <property type="match status" value="1"/>
</dbReference>
<protein>
    <recommendedName>
        <fullName>Peptidyl-prolyl cis-trans isomerase cyp6</fullName>
        <shortName>PPIase cyp6</shortName>
        <ecNumber>5.2.1.8</ecNumber>
    </recommendedName>
    <alternativeName>
        <fullName>Cyclophilin cyp6</fullName>
    </alternativeName>
    <alternativeName>
        <fullName>Rotamase cyp6</fullName>
    </alternativeName>
</protein>